<evidence type="ECO:0000255" key="1">
    <source>
        <dbReference type="PROSITE-ProRule" id="PRU01163"/>
    </source>
</evidence>
<evidence type="ECO:0000269" key="2">
    <source>
    </source>
</evidence>
<evidence type="ECO:0000305" key="3"/>
<evidence type="ECO:0007829" key="4">
    <source>
        <dbReference type="PDB" id="1T47"/>
    </source>
</evidence>
<feature type="chain" id="PRO_0000088409" description="4-hydroxyphenylpyruvate dioxygenase">
    <location>
        <begin position="1"/>
        <end position="381"/>
    </location>
</feature>
<feature type="domain" description="VOC 1" evidence="1">
    <location>
        <begin position="22"/>
        <end position="156"/>
    </location>
</feature>
<feature type="domain" description="VOC 2" evidence="1">
    <location>
        <begin position="184"/>
        <end position="338"/>
    </location>
</feature>
<feature type="binding site">
    <location>
        <position position="187"/>
    </location>
    <ligand>
        <name>Fe cation</name>
        <dbReference type="ChEBI" id="CHEBI:24875"/>
    </ligand>
</feature>
<feature type="binding site">
    <location>
        <position position="270"/>
    </location>
    <ligand>
        <name>Fe cation</name>
        <dbReference type="ChEBI" id="CHEBI:24875"/>
    </ligand>
</feature>
<feature type="binding site">
    <location>
        <position position="349"/>
    </location>
    <ligand>
        <name>Fe cation</name>
        <dbReference type="ChEBI" id="CHEBI:24875"/>
    </ligand>
</feature>
<feature type="sequence conflict" description="In Ref. 1; AAA50231." evidence="3" ref="1">
    <location>
        <position position="40"/>
    </location>
</feature>
<feature type="strand" evidence="4">
    <location>
        <begin position="22"/>
        <end position="29"/>
    </location>
</feature>
<feature type="helix" evidence="4">
    <location>
        <begin position="33"/>
        <end position="42"/>
    </location>
</feature>
<feature type="strand" evidence="4">
    <location>
        <begin position="47"/>
        <end position="53"/>
    </location>
</feature>
<feature type="helix" evidence="4">
    <location>
        <begin position="54"/>
        <end position="56"/>
    </location>
</feature>
<feature type="strand" evidence="4">
    <location>
        <begin position="60"/>
        <end position="68"/>
    </location>
</feature>
<feature type="strand" evidence="4">
    <location>
        <begin position="71"/>
        <end position="80"/>
    </location>
</feature>
<feature type="helix" evidence="4">
    <location>
        <begin position="84"/>
        <end position="96"/>
    </location>
</feature>
<feature type="strand" evidence="4">
    <location>
        <begin position="98"/>
        <end position="106"/>
    </location>
</feature>
<feature type="helix" evidence="4">
    <location>
        <begin position="110"/>
        <end position="119"/>
    </location>
</feature>
<feature type="strand" evidence="4">
    <location>
        <begin position="124"/>
        <end position="133"/>
    </location>
</feature>
<feature type="strand" evidence="4">
    <location>
        <begin position="136"/>
        <end position="144"/>
    </location>
</feature>
<feature type="strand" evidence="4">
    <location>
        <begin position="150"/>
        <end position="159"/>
    </location>
</feature>
<feature type="strand" evidence="4">
    <location>
        <begin position="161"/>
        <end position="164"/>
    </location>
</feature>
<feature type="strand" evidence="4">
    <location>
        <begin position="184"/>
        <end position="191"/>
    </location>
</feature>
<feature type="helix" evidence="4">
    <location>
        <begin position="197"/>
        <end position="208"/>
    </location>
</feature>
<feature type="helix" evidence="4">
    <location>
        <begin position="219"/>
        <end position="222"/>
    </location>
</feature>
<feature type="turn" evidence="4">
    <location>
        <begin position="223"/>
        <end position="226"/>
    </location>
</feature>
<feature type="strand" evidence="4">
    <location>
        <begin position="227"/>
        <end position="234"/>
    </location>
</feature>
<feature type="strand" evidence="4">
    <location>
        <begin position="240"/>
        <end position="247"/>
    </location>
</feature>
<feature type="strand" evidence="4">
    <location>
        <begin position="250"/>
        <end position="252"/>
    </location>
</feature>
<feature type="helix" evidence="4">
    <location>
        <begin position="255"/>
        <end position="263"/>
    </location>
</feature>
<feature type="strand" evidence="4">
    <location>
        <begin position="267"/>
        <end position="274"/>
    </location>
</feature>
<feature type="helix" evidence="4">
    <location>
        <begin position="278"/>
        <end position="287"/>
    </location>
</feature>
<feature type="helix" evidence="4">
    <location>
        <begin position="297"/>
        <end position="299"/>
    </location>
</feature>
<feature type="helix" evidence="4">
    <location>
        <begin position="303"/>
        <end position="307"/>
    </location>
</feature>
<feature type="helix" evidence="4">
    <location>
        <begin position="314"/>
        <end position="320"/>
    </location>
</feature>
<feature type="strand" evidence="4">
    <location>
        <begin position="323"/>
        <end position="326"/>
    </location>
</feature>
<feature type="strand" evidence="4">
    <location>
        <begin position="331"/>
        <end position="337"/>
    </location>
</feature>
<feature type="strand" evidence="4">
    <location>
        <begin position="340"/>
        <end position="344"/>
    </location>
</feature>
<feature type="strand" evidence="4">
    <location>
        <begin position="347"/>
        <end position="355"/>
    </location>
</feature>
<feature type="helix" evidence="4">
    <location>
        <begin position="363"/>
        <end position="376"/>
    </location>
</feature>
<name>HPPD_STRAW</name>
<gene>
    <name type="primary">hpd</name>
    <name type="ordered locus">SAV_5149</name>
</gene>
<accession>Q53586</accession>
<accession>Q93HN6</accession>
<reference key="1">
    <citation type="journal article" date="1994" name="J. Bacteriol.">
        <title>A Streptomyces avermitilis gene encoding a 4-hydroxyphenylpyruvic acid dioxygenase-like protein that directs the production of homogentisic acid and an ochronotic pigment in Escherichia coli.</title>
        <authorList>
            <person name="Denoya C.D."/>
            <person name="Skinner D.D."/>
            <person name="Morgenstern M.R."/>
        </authorList>
    </citation>
    <scope>NUCLEOTIDE SEQUENCE [GENOMIC DNA]</scope>
    <source>
        <strain>ATCC 31272 / MA-4848</strain>
    </source>
</reference>
<reference key="2">
    <citation type="journal article" date="2001" name="Proc. Natl. Acad. Sci. U.S.A.">
        <title>Genome sequence of an industrial microorganism Streptomyces avermitilis: deducing the ability of producing secondary metabolites.</title>
        <authorList>
            <person name="Omura S."/>
            <person name="Ikeda H."/>
            <person name="Ishikawa J."/>
            <person name="Hanamoto A."/>
            <person name="Takahashi C."/>
            <person name="Shinose M."/>
            <person name="Takahashi Y."/>
            <person name="Horikawa H."/>
            <person name="Nakazawa H."/>
            <person name="Osonoe T."/>
            <person name="Kikuchi H."/>
            <person name="Shiba T."/>
            <person name="Sakaki Y."/>
            <person name="Hattori M."/>
        </authorList>
    </citation>
    <scope>NUCLEOTIDE SEQUENCE [LARGE SCALE GENOMIC DNA]</scope>
    <source>
        <strain>ATCC 31267 / DSM 46492 / JCM 5070 / NBRC 14893 / NCIMB 12804 / NRRL 8165 / MA-4680</strain>
    </source>
</reference>
<reference key="3">
    <citation type="journal article" date="2003" name="Nat. Biotechnol.">
        <title>Complete genome sequence and comparative analysis of the industrial microorganism Streptomyces avermitilis.</title>
        <authorList>
            <person name="Ikeda H."/>
            <person name="Ishikawa J."/>
            <person name="Hanamoto A."/>
            <person name="Shinose M."/>
            <person name="Kikuchi H."/>
            <person name="Shiba T."/>
            <person name="Sakaki Y."/>
            <person name="Hattori M."/>
            <person name="Omura S."/>
        </authorList>
    </citation>
    <scope>NUCLEOTIDE SEQUENCE [LARGE SCALE GENOMIC DNA]</scope>
    <source>
        <strain>ATCC 31267 / DSM 46492 / JCM 5070 / NBRC 14893 / NCIMB 12804 / NRRL 8165 / MA-4680</strain>
    </source>
</reference>
<reference key="4">
    <citation type="journal article" date="2004" name="Biochemistry">
        <title>Structure of the ferrous form of (4-hydroxyphenyl)pyruvate dioxygenase from Streptomyces avermitilis in complex with the therapeutic herbicide, NTBC.</title>
        <authorList>
            <person name="Brownlee J.M."/>
            <person name="Johnson-Winters K."/>
            <person name="Harrison D.H.T."/>
            <person name="Moran G.R."/>
        </authorList>
    </citation>
    <scope>X-RAY CRYSTALLOGRAPHY (2.5 ANGSTROMS)</scope>
    <scope>METAL-BINDING SITES</scope>
    <scope>SUBUNIT</scope>
</reference>
<protein>
    <recommendedName>
        <fullName>4-hydroxyphenylpyruvate dioxygenase</fullName>
        <shortName>4HPPD</shortName>
        <shortName>HPD</shortName>
        <shortName>HPPDase</shortName>
        <ecNumber>1.13.11.27</ecNumber>
    </recommendedName>
</protein>
<dbReference type="EC" id="1.13.11.27"/>
<dbReference type="EMBL" id="U11864">
    <property type="protein sequence ID" value="AAA50231.1"/>
    <property type="molecule type" value="Genomic_DNA"/>
</dbReference>
<dbReference type="EMBL" id="AB070935">
    <property type="protein sequence ID" value="BAB69150.1"/>
    <property type="molecule type" value="Genomic_DNA"/>
</dbReference>
<dbReference type="EMBL" id="BA000030">
    <property type="protein sequence ID" value="BAC72861.1"/>
    <property type="molecule type" value="Genomic_DNA"/>
</dbReference>
<dbReference type="PDB" id="1T47">
    <property type="method" value="X-ray"/>
    <property type="resolution" value="2.50 A"/>
    <property type="chains" value="A/B=1-381"/>
</dbReference>
<dbReference type="PDBsum" id="1T47"/>
<dbReference type="SMR" id="Q53586"/>
<dbReference type="DrugBank" id="DB08307">
    <property type="generic name" value="2-{HYDROXY[2-NITRO-4-(TRIFLUOROMETHYL)PHENYL]METHYLENE}CYCLOHEXANE-1,3-DIONE"/>
</dbReference>
<dbReference type="GeneID" id="41542235"/>
<dbReference type="KEGG" id="sma:SAVERM_5149"/>
<dbReference type="eggNOG" id="COG3185">
    <property type="taxonomic scope" value="Bacteria"/>
</dbReference>
<dbReference type="HOGENOM" id="CLU_034004_1_1_11"/>
<dbReference type="OrthoDB" id="9780241at2"/>
<dbReference type="BRENDA" id="1.13.11.27">
    <property type="organism ID" value="5980"/>
</dbReference>
<dbReference type="SABIO-RK" id="Q53586"/>
<dbReference type="UniPathway" id="UPA00139">
    <property type="reaction ID" value="UER00362"/>
</dbReference>
<dbReference type="EvolutionaryTrace" id="Q53586"/>
<dbReference type="Proteomes" id="UP000000428">
    <property type="component" value="Chromosome"/>
</dbReference>
<dbReference type="GO" id="GO:0003868">
    <property type="term" value="F:4-hydroxyphenylpyruvate dioxygenase activity"/>
    <property type="evidence" value="ECO:0007669"/>
    <property type="project" value="UniProtKB-EC"/>
</dbReference>
<dbReference type="GO" id="GO:0046872">
    <property type="term" value="F:metal ion binding"/>
    <property type="evidence" value="ECO:0007669"/>
    <property type="project" value="UniProtKB-KW"/>
</dbReference>
<dbReference type="GO" id="GO:0006559">
    <property type="term" value="P:L-phenylalanine catabolic process"/>
    <property type="evidence" value="ECO:0007669"/>
    <property type="project" value="UniProtKB-UniPathway"/>
</dbReference>
<dbReference type="GO" id="GO:0006572">
    <property type="term" value="P:tyrosine catabolic process"/>
    <property type="evidence" value="ECO:0007669"/>
    <property type="project" value="UniProtKB-KW"/>
</dbReference>
<dbReference type="CDD" id="cd07250">
    <property type="entry name" value="HPPD_C_like"/>
    <property type="match status" value="1"/>
</dbReference>
<dbReference type="CDD" id="cd08342">
    <property type="entry name" value="HPPD_N_like"/>
    <property type="match status" value="1"/>
</dbReference>
<dbReference type="FunFam" id="3.10.180.10:FF:000001">
    <property type="entry name" value="4-hydroxyphenylpyruvate dioxygenase"/>
    <property type="match status" value="1"/>
</dbReference>
<dbReference type="Gene3D" id="3.10.180.10">
    <property type="entry name" value="2,3-Dihydroxybiphenyl 1,2-Dioxygenase, domain 1"/>
    <property type="match status" value="2"/>
</dbReference>
<dbReference type="InterPro" id="IPR005956">
    <property type="entry name" value="4OHPhenylPyrv_dOase"/>
</dbReference>
<dbReference type="InterPro" id="IPR041735">
    <property type="entry name" value="4OHPhenylPyrv_dOase_C"/>
</dbReference>
<dbReference type="InterPro" id="IPR041736">
    <property type="entry name" value="4OHPhenylPyrv_dOase_N"/>
</dbReference>
<dbReference type="InterPro" id="IPR029068">
    <property type="entry name" value="Glyas_Bleomycin-R_OHBP_Dase"/>
</dbReference>
<dbReference type="InterPro" id="IPR004360">
    <property type="entry name" value="Glyas_Fos-R_dOase_dom"/>
</dbReference>
<dbReference type="InterPro" id="IPR037523">
    <property type="entry name" value="VOC"/>
</dbReference>
<dbReference type="NCBIfam" id="TIGR01263">
    <property type="entry name" value="4HPPD"/>
    <property type="match status" value="1"/>
</dbReference>
<dbReference type="PANTHER" id="PTHR11959">
    <property type="entry name" value="4-HYDROXYPHENYLPYRUVATE DIOXYGENASE"/>
    <property type="match status" value="1"/>
</dbReference>
<dbReference type="PANTHER" id="PTHR11959:SF1">
    <property type="entry name" value="4-HYDROXYPHENYLPYRUVATE DIOXYGENASE"/>
    <property type="match status" value="1"/>
</dbReference>
<dbReference type="Pfam" id="PF00903">
    <property type="entry name" value="Glyoxalase"/>
    <property type="match status" value="2"/>
</dbReference>
<dbReference type="PIRSF" id="PIRSF009283">
    <property type="entry name" value="HPP_dOase"/>
    <property type="match status" value="1"/>
</dbReference>
<dbReference type="SUPFAM" id="SSF54593">
    <property type="entry name" value="Glyoxalase/Bleomycin resistance protein/Dihydroxybiphenyl dioxygenase"/>
    <property type="match status" value="1"/>
</dbReference>
<dbReference type="PROSITE" id="PS51819">
    <property type="entry name" value="VOC"/>
    <property type="match status" value="2"/>
</dbReference>
<organism>
    <name type="scientific">Streptomyces avermitilis (strain ATCC 31267 / DSM 46492 / JCM 5070 / NBRC 14893 / NCIMB 12804 / NRRL 8165 / MA-4680)</name>
    <dbReference type="NCBI Taxonomy" id="227882"/>
    <lineage>
        <taxon>Bacteria</taxon>
        <taxon>Bacillati</taxon>
        <taxon>Actinomycetota</taxon>
        <taxon>Actinomycetes</taxon>
        <taxon>Kitasatosporales</taxon>
        <taxon>Streptomycetaceae</taxon>
        <taxon>Streptomyces</taxon>
    </lineage>
</organism>
<proteinExistence type="evidence at protein level"/>
<comment type="catalytic activity">
    <reaction>
        <text>3-(4-hydroxyphenyl)pyruvate + O2 = homogentisate + CO2</text>
        <dbReference type="Rhea" id="RHEA:16189"/>
        <dbReference type="ChEBI" id="CHEBI:15379"/>
        <dbReference type="ChEBI" id="CHEBI:16169"/>
        <dbReference type="ChEBI" id="CHEBI:16526"/>
        <dbReference type="ChEBI" id="CHEBI:36242"/>
        <dbReference type="EC" id="1.13.11.27"/>
    </reaction>
</comment>
<comment type="cofactor">
    <cofactor>
        <name>Fe cation</name>
        <dbReference type="ChEBI" id="CHEBI:24875"/>
    </cofactor>
    <text>Binds 1 Fe cation per subunit.</text>
</comment>
<comment type="pathway">
    <text>Amino-acid degradation; L-phenylalanine degradation; acetoacetate and fumarate from L-phenylalanine: step 3/6.</text>
</comment>
<comment type="subunit">
    <text evidence="2">Homodimer.</text>
</comment>
<comment type="similarity">
    <text evidence="3">Belongs to the 4HPPD family.</text>
</comment>
<sequence>MTQTTHHTPDTARQADPFPVKGMDAVVFAVGNAKQAAHYYSTAFGMQLVAYSGPENGSRETASYVLTNGSARFVLTSVIKPATPWGHFLADHVAEHGDGVVDLAIEVPDARAAHAYAIEHGARSVAEPYELKDEHGTVVLAAIATYGKTRHTLVDRTGYDGPYLPGYVAAAPIVEPPAHRTFQAIDHCVGNVELGRMNEWVGFYNKVMGFTNMKEFVGDDIATEYSALMSKVVADGTLKVKFPINEPALAKKKSQIDEYLEFYGGAGVQHIALNTGDIVETVRTMRAAGVQFLDTPDSYYDTLGEWVGDTRVPVDTLRELKILADRDEDGYLLQIFTKPVQDRPTVFFEIIERHGSMGFGKGNFKALFEAIEREQEKRGNL</sequence>
<keyword id="KW-0002">3D-structure</keyword>
<keyword id="KW-0223">Dioxygenase</keyword>
<keyword id="KW-0408">Iron</keyword>
<keyword id="KW-0479">Metal-binding</keyword>
<keyword id="KW-0560">Oxidoreductase</keyword>
<keyword id="KW-0585">Phenylalanine catabolism</keyword>
<keyword id="KW-1185">Reference proteome</keyword>
<keyword id="KW-0677">Repeat</keyword>
<keyword id="KW-0828">Tyrosine catabolism</keyword>